<gene>
    <name evidence="1" type="primary">luxS</name>
    <name type="ordered locus">CKO_04036</name>
</gene>
<proteinExistence type="inferred from homology"/>
<evidence type="ECO:0000255" key="1">
    <source>
        <dbReference type="HAMAP-Rule" id="MF_00091"/>
    </source>
</evidence>
<dbReference type="EC" id="4.4.1.21" evidence="1"/>
<dbReference type="EMBL" id="CP000822">
    <property type="protein sequence ID" value="ABV15108.1"/>
    <property type="molecule type" value="Genomic_DNA"/>
</dbReference>
<dbReference type="RefSeq" id="WP_012134800.1">
    <property type="nucleotide sequence ID" value="NC_009792.1"/>
</dbReference>
<dbReference type="SMR" id="A8ANP5"/>
<dbReference type="STRING" id="290338.CKO_04036"/>
<dbReference type="GeneID" id="45137680"/>
<dbReference type="KEGG" id="cko:CKO_04036"/>
<dbReference type="HOGENOM" id="CLU_107531_2_0_6"/>
<dbReference type="OrthoDB" id="9788129at2"/>
<dbReference type="Proteomes" id="UP000008148">
    <property type="component" value="Chromosome"/>
</dbReference>
<dbReference type="GO" id="GO:0005506">
    <property type="term" value="F:iron ion binding"/>
    <property type="evidence" value="ECO:0007669"/>
    <property type="project" value="InterPro"/>
</dbReference>
<dbReference type="GO" id="GO:0043768">
    <property type="term" value="F:S-ribosylhomocysteine lyase activity"/>
    <property type="evidence" value="ECO:0007669"/>
    <property type="project" value="UniProtKB-UniRule"/>
</dbReference>
<dbReference type="GO" id="GO:0009372">
    <property type="term" value="P:quorum sensing"/>
    <property type="evidence" value="ECO:0007669"/>
    <property type="project" value="UniProtKB-UniRule"/>
</dbReference>
<dbReference type="FunFam" id="3.30.1360.80:FF:000001">
    <property type="entry name" value="S-ribosylhomocysteine lyase"/>
    <property type="match status" value="1"/>
</dbReference>
<dbReference type="Gene3D" id="3.30.1360.80">
    <property type="entry name" value="S-ribosylhomocysteinase (LuxS)"/>
    <property type="match status" value="1"/>
</dbReference>
<dbReference type="HAMAP" id="MF_00091">
    <property type="entry name" value="LuxS"/>
    <property type="match status" value="1"/>
</dbReference>
<dbReference type="InterPro" id="IPR037005">
    <property type="entry name" value="LuxS_sf"/>
</dbReference>
<dbReference type="InterPro" id="IPR011249">
    <property type="entry name" value="Metalloenz_LuxS/M16"/>
</dbReference>
<dbReference type="InterPro" id="IPR003815">
    <property type="entry name" value="S-ribosylhomocysteinase"/>
</dbReference>
<dbReference type="NCBIfam" id="NF002602">
    <property type="entry name" value="PRK02260.1-2"/>
    <property type="match status" value="1"/>
</dbReference>
<dbReference type="PANTHER" id="PTHR35799">
    <property type="entry name" value="S-RIBOSYLHOMOCYSTEINE LYASE"/>
    <property type="match status" value="1"/>
</dbReference>
<dbReference type="PANTHER" id="PTHR35799:SF1">
    <property type="entry name" value="S-RIBOSYLHOMOCYSTEINE LYASE"/>
    <property type="match status" value="1"/>
</dbReference>
<dbReference type="Pfam" id="PF02664">
    <property type="entry name" value="LuxS"/>
    <property type="match status" value="1"/>
</dbReference>
<dbReference type="PIRSF" id="PIRSF006160">
    <property type="entry name" value="AI2"/>
    <property type="match status" value="1"/>
</dbReference>
<dbReference type="PRINTS" id="PR01487">
    <property type="entry name" value="LUXSPROTEIN"/>
</dbReference>
<dbReference type="SUPFAM" id="SSF63411">
    <property type="entry name" value="LuxS/MPP-like metallohydrolase"/>
    <property type="match status" value="1"/>
</dbReference>
<feature type="chain" id="PRO_1000004842" description="S-ribosylhomocysteine lyase">
    <location>
        <begin position="1"/>
        <end position="171"/>
    </location>
</feature>
<feature type="binding site" evidence="1">
    <location>
        <position position="54"/>
    </location>
    <ligand>
        <name>Fe cation</name>
        <dbReference type="ChEBI" id="CHEBI:24875"/>
    </ligand>
</feature>
<feature type="binding site" evidence="1">
    <location>
        <position position="58"/>
    </location>
    <ligand>
        <name>Fe cation</name>
        <dbReference type="ChEBI" id="CHEBI:24875"/>
    </ligand>
</feature>
<feature type="binding site" evidence="1">
    <location>
        <position position="128"/>
    </location>
    <ligand>
        <name>Fe cation</name>
        <dbReference type="ChEBI" id="CHEBI:24875"/>
    </ligand>
</feature>
<sequence>MPLLDSFTVDHTRMEAPAVRVAKTMNTPHGDTITVFDLRFCIPNKEVMPEKGIHTLEHLFAGFMRNHLNGNGVEIIDISPMGCRTGFYMSLIGTPDEQRVADAWKAAMADVLKVKEQNQIPELNVYQCGTYQMHSLSEAQDIARHILEHDVRINSNEELALPKDKLQELHI</sequence>
<name>LUXS_CITK8</name>
<accession>A8ANP5</accession>
<keyword id="KW-0071">Autoinducer synthesis</keyword>
<keyword id="KW-0408">Iron</keyword>
<keyword id="KW-0456">Lyase</keyword>
<keyword id="KW-0479">Metal-binding</keyword>
<keyword id="KW-0673">Quorum sensing</keyword>
<keyword id="KW-1185">Reference proteome</keyword>
<protein>
    <recommendedName>
        <fullName evidence="1">S-ribosylhomocysteine lyase</fullName>
        <ecNumber evidence="1">4.4.1.21</ecNumber>
    </recommendedName>
    <alternativeName>
        <fullName evidence="1">AI-2 synthesis protein</fullName>
    </alternativeName>
    <alternativeName>
        <fullName evidence="1">Autoinducer-2 production protein LuxS</fullName>
    </alternativeName>
</protein>
<reference key="1">
    <citation type="submission" date="2007-08" db="EMBL/GenBank/DDBJ databases">
        <authorList>
            <consortium name="The Citrobacter koseri Genome Sequencing Project"/>
            <person name="McClelland M."/>
            <person name="Sanderson E.K."/>
            <person name="Porwollik S."/>
            <person name="Spieth J."/>
            <person name="Clifton W.S."/>
            <person name="Latreille P."/>
            <person name="Courtney L."/>
            <person name="Wang C."/>
            <person name="Pepin K."/>
            <person name="Bhonagiri V."/>
            <person name="Nash W."/>
            <person name="Johnson M."/>
            <person name="Thiruvilangam P."/>
            <person name="Wilson R."/>
        </authorList>
    </citation>
    <scope>NUCLEOTIDE SEQUENCE [LARGE SCALE GENOMIC DNA]</scope>
    <source>
        <strain>ATCC BAA-895 / CDC 4225-83 / SGSC4696</strain>
    </source>
</reference>
<organism>
    <name type="scientific">Citrobacter koseri (strain ATCC BAA-895 / CDC 4225-83 / SGSC4696)</name>
    <dbReference type="NCBI Taxonomy" id="290338"/>
    <lineage>
        <taxon>Bacteria</taxon>
        <taxon>Pseudomonadati</taxon>
        <taxon>Pseudomonadota</taxon>
        <taxon>Gammaproteobacteria</taxon>
        <taxon>Enterobacterales</taxon>
        <taxon>Enterobacteriaceae</taxon>
        <taxon>Citrobacter</taxon>
    </lineage>
</organism>
<comment type="function">
    <text evidence="1">Involved in the synthesis of autoinducer 2 (AI-2) which is secreted by bacteria and is used to communicate both the cell density and the metabolic potential of the environment. The regulation of gene expression in response to changes in cell density is called quorum sensing. Catalyzes the transformation of S-ribosylhomocysteine (RHC) to homocysteine (HC) and 4,5-dihydroxy-2,3-pentadione (DPD).</text>
</comment>
<comment type="catalytic activity">
    <reaction evidence="1">
        <text>S-(5-deoxy-D-ribos-5-yl)-L-homocysteine = (S)-4,5-dihydroxypentane-2,3-dione + L-homocysteine</text>
        <dbReference type="Rhea" id="RHEA:17753"/>
        <dbReference type="ChEBI" id="CHEBI:29484"/>
        <dbReference type="ChEBI" id="CHEBI:58195"/>
        <dbReference type="ChEBI" id="CHEBI:58199"/>
        <dbReference type="EC" id="4.4.1.21"/>
    </reaction>
</comment>
<comment type="cofactor">
    <cofactor evidence="1">
        <name>Fe cation</name>
        <dbReference type="ChEBI" id="CHEBI:24875"/>
    </cofactor>
    <text evidence="1">Binds 1 Fe cation per subunit.</text>
</comment>
<comment type="subunit">
    <text evidence="1">Homodimer.</text>
</comment>
<comment type="similarity">
    <text evidence="1">Belongs to the LuxS family.</text>
</comment>